<gene>
    <name type="primary">NAD-ME2</name>
    <name type="ordered locus">At4g00570</name>
    <name type="ORF">F6N23.16</name>
</gene>
<sequence>MMWKNIAGLSKAAAAARTHGSRRCFSTAIPGPCIVHKRGADILHDPWFNKDTGFPLTERDRLGIRGLLPPRVMTCVQQCDRFIESFRSLENNTKGEPENVVALAKWRMLNRLHDRNETLYYRVLIDNIKDFAPIIYTPTVGLVCQNYSGLYRRPRGMYFSAKDKGEMMSMIYNWPAPQVDMIVITDGSRILGLGDLGVQGIGIPIGKLDMYVAAAGINPQRVLPIMLDVGTNNEKLLQNDLYLGVRQPRLEGEEYLEIIDEFMEAAFTRWPKAVVQFEDFQAKWAFGTLERYRKKFCMFNDDVQGTAGVALAGLLGTVRAQGRPISDFVNQKIVVVGAGSAGLGVTKMAVQAVARMAGISESEATKNFYLIDKDGLVTTERTKLDPGAVLFAKNPAEIREGASIVEVVKKVRPHVLLGLSGVGGIFNEEVLKAMRESDSCKPAIFAMSNPTLNAECTAADAFKHAGGNIVFASGSPFENVELENGKVGHVNQANNMYLFPGIGLGTLLSGARIVTDGMLQAASECLASYMTDEEVQKGILYPSINNIRHITAEVGAAVLRAAVTDDIAEGHGDVGPKDLSHMSKEDTVNYITRNMWFPVYSPLVHEK</sequence>
<reference key="1">
    <citation type="journal article" date="2008" name="Plant Physiol.">
        <title>Arabidopsis NAD-malic enzyme functions as a homodimer and heterodimer and has a major impact on nocturnal metabolism.</title>
        <authorList>
            <person name="Tronconi M.A."/>
            <person name="Fahnenstich H."/>
            <person name="Gerrard Weehler M.C."/>
            <person name="Andreo C.S."/>
            <person name="Fluegge U.-I."/>
            <person name="Drincovich M.F."/>
            <person name="Maurino V.G."/>
        </authorList>
    </citation>
    <scope>NUCLEOTIDE SEQUENCE [MRNA]</scope>
    <scope>FUNCTION</scope>
    <scope>TISSUE SPECIFICITY</scope>
    <scope>DEVELOPMENTAL STAGE</scope>
    <scope>CATALYTIC ACTIVITY</scope>
    <scope>BIOPHYSICOCHEMICAL PROPERTIES</scope>
    <scope>SUBUNIT</scope>
    <scope>DISRUPTION PHENOTYPE</scope>
    <scope>INDUCTION BY DARKNESS</scope>
</reference>
<reference key="2">
    <citation type="journal article" date="1999" name="Nature">
        <title>Sequence and analysis of chromosome 4 of the plant Arabidopsis thaliana.</title>
        <authorList>
            <person name="Mayer K.F.X."/>
            <person name="Schueller C."/>
            <person name="Wambutt R."/>
            <person name="Murphy G."/>
            <person name="Volckaert G."/>
            <person name="Pohl T."/>
            <person name="Duesterhoeft A."/>
            <person name="Stiekema W."/>
            <person name="Entian K.-D."/>
            <person name="Terryn N."/>
            <person name="Harris B."/>
            <person name="Ansorge W."/>
            <person name="Brandt P."/>
            <person name="Grivell L.A."/>
            <person name="Rieger M."/>
            <person name="Weichselgartner M."/>
            <person name="de Simone V."/>
            <person name="Obermaier B."/>
            <person name="Mache R."/>
            <person name="Mueller M."/>
            <person name="Kreis M."/>
            <person name="Delseny M."/>
            <person name="Puigdomenech P."/>
            <person name="Watson M."/>
            <person name="Schmidtheini T."/>
            <person name="Reichert B."/>
            <person name="Portetelle D."/>
            <person name="Perez-Alonso M."/>
            <person name="Boutry M."/>
            <person name="Bancroft I."/>
            <person name="Vos P."/>
            <person name="Hoheisel J."/>
            <person name="Zimmermann W."/>
            <person name="Wedler H."/>
            <person name="Ridley P."/>
            <person name="Langham S.-A."/>
            <person name="McCullagh B."/>
            <person name="Bilham L."/>
            <person name="Robben J."/>
            <person name="van der Schueren J."/>
            <person name="Grymonprez B."/>
            <person name="Chuang Y.-J."/>
            <person name="Vandenbussche F."/>
            <person name="Braeken M."/>
            <person name="Weltjens I."/>
            <person name="Voet M."/>
            <person name="Bastiaens I."/>
            <person name="Aert R."/>
            <person name="Defoor E."/>
            <person name="Weitzenegger T."/>
            <person name="Bothe G."/>
            <person name="Ramsperger U."/>
            <person name="Hilbert H."/>
            <person name="Braun M."/>
            <person name="Holzer E."/>
            <person name="Brandt A."/>
            <person name="Peters S."/>
            <person name="van Staveren M."/>
            <person name="Dirkse W."/>
            <person name="Mooijman P."/>
            <person name="Klein Lankhorst R."/>
            <person name="Rose M."/>
            <person name="Hauf J."/>
            <person name="Koetter P."/>
            <person name="Berneiser S."/>
            <person name="Hempel S."/>
            <person name="Feldpausch M."/>
            <person name="Lamberth S."/>
            <person name="Van den Daele H."/>
            <person name="De Keyser A."/>
            <person name="Buysshaert C."/>
            <person name="Gielen J."/>
            <person name="Villarroel R."/>
            <person name="De Clercq R."/>
            <person name="van Montagu M."/>
            <person name="Rogers J."/>
            <person name="Cronin A."/>
            <person name="Quail M.A."/>
            <person name="Bray-Allen S."/>
            <person name="Clark L."/>
            <person name="Doggett J."/>
            <person name="Hall S."/>
            <person name="Kay M."/>
            <person name="Lennard N."/>
            <person name="McLay K."/>
            <person name="Mayes R."/>
            <person name="Pettett A."/>
            <person name="Rajandream M.A."/>
            <person name="Lyne M."/>
            <person name="Benes V."/>
            <person name="Rechmann S."/>
            <person name="Borkova D."/>
            <person name="Bloecker H."/>
            <person name="Scharfe M."/>
            <person name="Grimm M."/>
            <person name="Loehnert T.-H."/>
            <person name="Dose S."/>
            <person name="de Haan M."/>
            <person name="Maarse A.C."/>
            <person name="Schaefer M."/>
            <person name="Mueller-Auer S."/>
            <person name="Gabel C."/>
            <person name="Fuchs M."/>
            <person name="Fartmann B."/>
            <person name="Granderath K."/>
            <person name="Dauner D."/>
            <person name="Herzl A."/>
            <person name="Neumann S."/>
            <person name="Argiriou A."/>
            <person name="Vitale D."/>
            <person name="Liguori R."/>
            <person name="Piravandi E."/>
            <person name="Massenet O."/>
            <person name="Quigley F."/>
            <person name="Clabauld G."/>
            <person name="Muendlein A."/>
            <person name="Felber R."/>
            <person name="Schnabl S."/>
            <person name="Hiller R."/>
            <person name="Schmidt W."/>
            <person name="Lecharny A."/>
            <person name="Aubourg S."/>
            <person name="Chefdor F."/>
            <person name="Cooke R."/>
            <person name="Berger C."/>
            <person name="Monfort A."/>
            <person name="Casacuberta E."/>
            <person name="Gibbons T."/>
            <person name="Weber N."/>
            <person name="Vandenbol M."/>
            <person name="Bargues M."/>
            <person name="Terol J."/>
            <person name="Torres A."/>
            <person name="Perez-Perez A."/>
            <person name="Purnelle B."/>
            <person name="Bent E."/>
            <person name="Johnson S."/>
            <person name="Tacon D."/>
            <person name="Jesse T."/>
            <person name="Heijnen L."/>
            <person name="Schwarz S."/>
            <person name="Scholler P."/>
            <person name="Heber S."/>
            <person name="Francs P."/>
            <person name="Bielke C."/>
            <person name="Frishman D."/>
            <person name="Haase D."/>
            <person name="Lemcke K."/>
            <person name="Mewes H.-W."/>
            <person name="Stocker S."/>
            <person name="Zaccaria P."/>
            <person name="Bevan M."/>
            <person name="Wilson R.K."/>
            <person name="de la Bastide M."/>
            <person name="Habermann K."/>
            <person name="Parnell L."/>
            <person name="Dedhia N."/>
            <person name="Gnoj L."/>
            <person name="Schutz K."/>
            <person name="Huang E."/>
            <person name="Spiegel L."/>
            <person name="Sekhon M."/>
            <person name="Murray J."/>
            <person name="Sheet P."/>
            <person name="Cordes M."/>
            <person name="Abu-Threideh J."/>
            <person name="Stoneking T."/>
            <person name="Kalicki J."/>
            <person name="Graves T."/>
            <person name="Harmon G."/>
            <person name="Edwards J."/>
            <person name="Latreille P."/>
            <person name="Courtney L."/>
            <person name="Cloud J."/>
            <person name="Abbott A."/>
            <person name="Scott K."/>
            <person name="Johnson D."/>
            <person name="Minx P."/>
            <person name="Bentley D."/>
            <person name="Fulton B."/>
            <person name="Miller N."/>
            <person name="Greco T."/>
            <person name="Kemp K."/>
            <person name="Kramer J."/>
            <person name="Fulton L."/>
            <person name="Mardis E."/>
            <person name="Dante M."/>
            <person name="Pepin K."/>
            <person name="Hillier L.W."/>
            <person name="Nelson J."/>
            <person name="Spieth J."/>
            <person name="Ryan E."/>
            <person name="Andrews S."/>
            <person name="Geisel C."/>
            <person name="Layman D."/>
            <person name="Du H."/>
            <person name="Ali J."/>
            <person name="Berghoff A."/>
            <person name="Jones K."/>
            <person name="Drone K."/>
            <person name="Cotton M."/>
            <person name="Joshu C."/>
            <person name="Antonoiu B."/>
            <person name="Zidanic M."/>
            <person name="Strong C."/>
            <person name="Sun H."/>
            <person name="Lamar B."/>
            <person name="Yordan C."/>
            <person name="Ma P."/>
            <person name="Zhong J."/>
            <person name="Preston R."/>
            <person name="Vil D."/>
            <person name="Shekher M."/>
            <person name="Matero A."/>
            <person name="Shah R."/>
            <person name="Swaby I.K."/>
            <person name="O'Shaughnessy A."/>
            <person name="Rodriguez M."/>
            <person name="Hoffman J."/>
            <person name="Till S."/>
            <person name="Granat S."/>
            <person name="Shohdy N."/>
            <person name="Hasegawa A."/>
            <person name="Hameed A."/>
            <person name="Lodhi M."/>
            <person name="Johnson A."/>
            <person name="Chen E."/>
            <person name="Marra M.A."/>
            <person name="Martienssen R."/>
            <person name="McCombie W.R."/>
        </authorList>
    </citation>
    <scope>NUCLEOTIDE SEQUENCE [LARGE SCALE GENOMIC DNA]</scope>
    <source>
        <strain>cv. Columbia</strain>
    </source>
</reference>
<reference key="3">
    <citation type="journal article" date="2017" name="Plant J.">
        <title>Araport11: a complete reannotation of the Arabidopsis thaliana reference genome.</title>
        <authorList>
            <person name="Cheng C.Y."/>
            <person name="Krishnakumar V."/>
            <person name="Chan A.P."/>
            <person name="Thibaud-Nissen F."/>
            <person name="Schobel S."/>
            <person name="Town C.D."/>
        </authorList>
    </citation>
    <scope>GENOME REANNOTATION</scope>
    <source>
        <strain>cv. Columbia</strain>
    </source>
</reference>
<reference key="4">
    <citation type="journal article" date="2003" name="Science">
        <title>Empirical analysis of transcriptional activity in the Arabidopsis genome.</title>
        <authorList>
            <person name="Yamada K."/>
            <person name="Lim J."/>
            <person name="Dale J.M."/>
            <person name="Chen H."/>
            <person name="Shinn P."/>
            <person name="Palm C.J."/>
            <person name="Southwick A.M."/>
            <person name="Wu H.C."/>
            <person name="Kim C.J."/>
            <person name="Nguyen M."/>
            <person name="Pham P.K."/>
            <person name="Cheuk R.F."/>
            <person name="Karlin-Newmann G."/>
            <person name="Liu S.X."/>
            <person name="Lam B."/>
            <person name="Sakano H."/>
            <person name="Wu T."/>
            <person name="Yu G."/>
            <person name="Miranda M."/>
            <person name="Quach H.L."/>
            <person name="Tripp M."/>
            <person name="Chang C.H."/>
            <person name="Lee J.M."/>
            <person name="Toriumi M.J."/>
            <person name="Chan M.M."/>
            <person name="Tang C.C."/>
            <person name="Onodera C.S."/>
            <person name="Deng J.M."/>
            <person name="Akiyama K."/>
            <person name="Ansari Y."/>
            <person name="Arakawa T."/>
            <person name="Banh J."/>
            <person name="Banno F."/>
            <person name="Bowser L."/>
            <person name="Brooks S.Y."/>
            <person name="Carninci P."/>
            <person name="Chao Q."/>
            <person name="Choy N."/>
            <person name="Enju A."/>
            <person name="Goldsmith A.D."/>
            <person name="Gurjal M."/>
            <person name="Hansen N.F."/>
            <person name="Hayashizaki Y."/>
            <person name="Johnson-Hopson C."/>
            <person name="Hsuan V.W."/>
            <person name="Iida K."/>
            <person name="Karnes M."/>
            <person name="Khan S."/>
            <person name="Koesema E."/>
            <person name="Ishida J."/>
            <person name="Jiang P.X."/>
            <person name="Jones T."/>
            <person name="Kawai J."/>
            <person name="Kamiya A."/>
            <person name="Meyers C."/>
            <person name="Nakajima M."/>
            <person name="Narusaka M."/>
            <person name="Seki M."/>
            <person name="Sakurai T."/>
            <person name="Satou M."/>
            <person name="Tamse R."/>
            <person name="Vaysberg M."/>
            <person name="Wallender E.K."/>
            <person name="Wong C."/>
            <person name="Yamamura Y."/>
            <person name="Yuan S."/>
            <person name="Shinozaki K."/>
            <person name="Davis R.W."/>
            <person name="Theologis A."/>
            <person name="Ecker J.R."/>
        </authorList>
    </citation>
    <scope>NUCLEOTIDE SEQUENCE [LARGE SCALE MRNA]</scope>
    <source>
        <strain>cv. Columbia</strain>
    </source>
</reference>
<reference key="5">
    <citation type="journal article" date="2004" name="Plant Cell">
        <title>Experimental analysis of the Arabidopsis mitochondrial proteome highlights signaling and regulatory components, provides assessment of targeting prediction programs, and indicates plant-specific mitochondrial proteins.</title>
        <authorList>
            <person name="Heazlewood J.L."/>
            <person name="Tonti-Filippini J.S."/>
            <person name="Gout A.M."/>
            <person name="Day D.A."/>
            <person name="Whelan J."/>
            <person name="Millar A.H."/>
        </authorList>
    </citation>
    <scope>IDENTIFICATION BY MASS SPECTROMETRY</scope>
    <scope>SUBCELLULAR LOCATION [LARGE SCALE ANALYSIS]</scope>
    <source>
        <strain>cv. Landsberg erecta</strain>
    </source>
</reference>
<reference key="6">
    <citation type="journal article" date="2010" name="Biochem. J.">
        <title>NAD-malic enzymes of Arabidopsis thaliana display distinct kinetic mechanisms that support differences in physiological control.</title>
        <authorList>
            <person name="Tronconi M.A."/>
            <person name="Gerrard Wheeler M.C."/>
            <person name="Maurino V.G."/>
            <person name="Drincovich M.F."/>
            <person name="Andreo C.S."/>
        </authorList>
    </citation>
    <scope>SUBUNIT</scope>
    <scope>CATALYTIC ACTIVITY</scope>
    <scope>ACTIVITY REGULATION</scope>
    <scope>BIOPHYSICOCHEMICAL PROPERTIES</scope>
</reference>
<reference key="7">
    <citation type="journal article" date="2010" name="J. Biol. Chem.">
        <title>Three different and tissue-specific NAD-malic enzymes generated by alternative subunit association in Arabidopsis thaliana.</title>
        <authorList>
            <person name="Tronconi M.A."/>
            <person name="Maurino V.G."/>
            <person name="Andreo C.S."/>
            <person name="Drincovich M.F."/>
        </authorList>
    </citation>
    <scope>TISSUE SPECIFICITY</scope>
    <scope>BIOPHYSICOCHEMICAL PROPERTIES</scope>
    <scope>DEVELOPMENTAL STAGE</scope>
    <scope>INTERACTION WITH NAD-ME1</scope>
    <scope>ACTIVITY REGULATION</scope>
    <scope>SUBUNIT</scope>
    <scope>IDENTIFICATION IN NAD-MEH COMPLEX</scope>
    <scope>SUBCELLULAR LOCATION</scope>
    <scope>GENE FAMILY</scope>
    <scope>NOMENCLATURE</scope>
</reference>
<reference key="8">
    <citation type="journal article" date="2011" name="Plant Physiol.">
        <title>Defining the protein complex proteome of plant mitochondria.</title>
        <authorList>
            <person name="Klodmann J."/>
            <person name="Senkler M."/>
            <person name="Rode C."/>
            <person name="Braun H.-P."/>
        </authorList>
    </citation>
    <scope>IDENTIFICATION BY MASS SPECTROMETRY</scope>
    <scope>SUBCELLULAR LOCATION [LARGE SCALE ANALYSIS]</scope>
</reference>
<reference key="9">
    <citation type="journal article" date="2012" name="Biochimie">
        <title>Differential fumarate binding to Arabidopsis NAD+-malic enzymes 1 and -2 produces an opposite activity modulation.</title>
        <authorList>
            <person name="Tronconi M.A."/>
            <person name="Gerrard Wheeler M.C."/>
            <person name="Drincovich M.F."/>
            <person name="Andreo C.S."/>
        </authorList>
    </citation>
    <scope>ACTIVITY REGULATION</scope>
</reference>
<keyword id="KW-0479">Metal-binding</keyword>
<keyword id="KW-0496">Mitochondrion</keyword>
<keyword id="KW-0520">NAD</keyword>
<keyword id="KW-0560">Oxidoreductase</keyword>
<keyword id="KW-1185">Reference proteome</keyword>
<keyword id="KW-0809">Transit peptide</keyword>
<proteinExistence type="evidence at protein level"/>
<evidence type="ECO:0000250" key="1"/>
<evidence type="ECO:0000255" key="2"/>
<evidence type="ECO:0000269" key="3">
    <source>
    </source>
</evidence>
<evidence type="ECO:0000269" key="4">
    <source>
    </source>
</evidence>
<evidence type="ECO:0000269" key="5">
    <source>
    </source>
</evidence>
<evidence type="ECO:0000269" key="6">
    <source>
    </source>
</evidence>
<evidence type="ECO:0000269" key="7">
    <source>
    </source>
</evidence>
<evidence type="ECO:0000269" key="8">
    <source>
    </source>
</evidence>
<evidence type="ECO:0000305" key="9"/>
<comment type="function">
    <text evidence="4">Involved in the regulation of sugars and amino acids metabolisms during the night period.</text>
</comment>
<comment type="catalytic activity">
    <reaction evidence="4 6">
        <text>(S)-malate + NAD(+) = pyruvate + CO2 + NADH</text>
        <dbReference type="Rhea" id="RHEA:12653"/>
        <dbReference type="ChEBI" id="CHEBI:15361"/>
        <dbReference type="ChEBI" id="CHEBI:15589"/>
        <dbReference type="ChEBI" id="CHEBI:16526"/>
        <dbReference type="ChEBI" id="CHEBI:57540"/>
        <dbReference type="ChEBI" id="CHEBI:57945"/>
        <dbReference type="EC" id="1.1.1.39"/>
    </reaction>
</comment>
<comment type="cofactor">
    <cofactor evidence="1">
        <name>Mg(2+)</name>
        <dbReference type="ChEBI" id="CHEBI:18420"/>
    </cofactor>
    <cofactor evidence="1">
        <name>Mn(2+)</name>
        <dbReference type="ChEBI" id="CHEBI:29035"/>
    </cofactor>
    <text evidence="1">Divalent metal cations. Prefers magnesium or manganese.</text>
</comment>
<comment type="activity regulation">
    <text evidence="5 6 8">Activated by 2-ketoglutarate, phosphoenolpyruvate (PEP), fructose 1,6-biphosphate (FBP) and coenzyme A (acetyl-CoA and CoA) as homodimer and by oxaloacetate (OAA), 2-ketoglutarate, succinate, fumarate and CoA as heterodimer NAD-MEH. Repressed by succinate and fumarate as homodimer, in the presence of NAD(+) and competitively toward the substrate L-malate.</text>
</comment>
<comment type="biophysicochemical properties">
    <kinetics>
        <KM evidence="4 5 6">0.5 mM for NAD (homodimer)</KM>
        <KM evidence="4 5 6">0.55 mM for NAD (NAD-MEH heterodimer)</KM>
        <KM evidence="4 5 6">3 mM for L-malate (homodimer)</KM>
        <KM evidence="4 5 6">2.7 mM for L-malate (NAD-MEH heterodimer)</KM>
        <KM evidence="4 5 6">0.2 mM for L-malate (homodimer in the presence of coenzyme A (CoA))</KM>
        <KM evidence="4 5 6">0.8 mM for L-malate (NAD-MEH heterodimer in the presence of coenzyme A (CoA))</KM>
        <text>kcat is 44.1 sec(-1) for the homodimer and 39 sec(-1) for the NAD-MEH heterodimer with NAD as substrate. In the presence of coenzyme A (CoA), kcat is 69.1 sec(-1) for the homodimer and 40.6 sec(-1) for the NAD-MEH heterodimer with NAD as substrate.</text>
    </kinetics>
    <phDependence>
        <text evidence="4 5 6">Optimum pH is 6.6 for homodimer and 6.5 for NAD-MEH heterodimer. In the presence of coenzyme A (CoA), optimum pH is 6.8 for both homodimer and NAD-MEH heterodimer.</text>
    </phDependence>
</comment>
<comment type="subunit">
    <text evidence="4 5 6">Homodimer. Heterodimer of two related subunits in NAD-MEH complex. Interacts with NAD-ME1.</text>
</comment>
<comment type="subcellular location">
    <subcellularLocation>
        <location evidence="3 5 7">Mitochondrion</location>
    </subcellularLocation>
</comment>
<comment type="tissue specificity">
    <text evidence="4 5">Expressed in leaves, stems, flowers, and roots (at protein level). Present in pollen.</text>
</comment>
<comment type="developmental stage">
    <text evidence="4 5">In flowers, mostly present in anthers, stigmatic papillae, gynoecium (apical part) and filaments, and, barely in sepals (at protein level). In developing siliques, localized in the apical part and the abscission zone. In seedlings, expressed in cotyledons, hypocotyls, and root tip. Accumulates slowly in leaves as they mature, in the mesophyll and the cells that surround the vascular bundles.</text>
</comment>
<comment type="induction">
    <text evidence="4">Accumulates during the night period (at protein level).</text>
</comment>
<comment type="disruption phenotype">
    <text evidence="4">When associated with NAD-ME1 disruption, loss of NAD-dependent malic enzyme activity associated with an altered steady-state levels of sugars and amino acids at the end of the light period.</text>
</comment>
<comment type="similarity">
    <text evidence="9">Belongs to the malic enzymes family.</text>
</comment>
<comment type="sequence caution" evidence="9">
    <conflict type="erroneous initiation">
        <sequence resource="EMBL-CDS" id="AAC13636"/>
    </conflict>
    <text>Truncated N-terminus.</text>
</comment>
<comment type="sequence caution" evidence="9">
    <conflict type="erroneous gene model prediction">
        <sequence resource="EMBL-CDS" id="CAB80866"/>
    </conflict>
</comment>
<comment type="sequence caution" evidence="9">
    <conflict type="erroneous initiation">
        <sequence resource="EMBL-CDS" id="CAB80866"/>
    </conflict>
    <text>Truncated N-terminus.</text>
</comment>
<organism>
    <name type="scientific">Arabidopsis thaliana</name>
    <name type="common">Mouse-ear cress</name>
    <dbReference type="NCBI Taxonomy" id="3702"/>
    <lineage>
        <taxon>Eukaryota</taxon>
        <taxon>Viridiplantae</taxon>
        <taxon>Streptophyta</taxon>
        <taxon>Embryophyta</taxon>
        <taxon>Tracheophyta</taxon>
        <taxon>Spermatophyta</taxon>
        <taxon>Magnoliopsida</taxon>
        <taxon>eudicotyledons</taxon>
        <taxon>Gunneridae</taxon>
        <taxon>Pentapetalae</taxon>
        <taxon>rosids</taxon>
        <taxon>malvids</taxon>
        <taxon>Brassicales</taxon>
        <taxon>Brassicaceae</taxon>
        <taxon>Camelineae</taxon>
        <taxon>Arabidopsis</taxon>
    </lineage>
</organism>
<name>MAO2_ARATH</name>
<accession>Q8L7K9</accession>
<accession>O65266</accession>
<accession>Q9M162</accession>
<dbReference type="EC" id="1.1.1.39"/>
<dbReference type="EMBL" id="AF058919">
    <property type="protein sequence ID" value="AAC13636.2"/>
    <property type="status" value="ALT_INIT"/>
    <property type="molecule type" value="Genomic_DNA"/>
</dbReference>
<dbReference type="EMBL" id="AL161472">
    <property type="protein sequence ID" value="CAB80866.1"/>
    <property type="status" value="ALT_SEQ"/>
    <property type="molecule type" value="Genomic_DNA"/>
</dbReference>
<dbReference type="EMBL" id="CP002687">
    <property type="protein sequence ID" value="AEE81903.1"/>
    <property type="molecule type" value="Genomic_DNA"/>
</dbReference>
<dbReference type="EMBL" id="AY128396">
    <property type="protein sequence ID" value="AAM91599.1"/>
    <property type="molecule type" value="mRNA"/>
</dbReference>
<dbReference type="EMBL" id="BT000075">
    <property type="protein sequence ID" value="AAN15394.1"/>
    <property type="molecule type" value="mRNA"/>
</dbReference>
<dbReference type="EMBL" id="BT002046">
    <property type="protein sequence ID" value="AAN72057.1"/>
    <property type="molecule type" value="mRNA"/>
</dbReference>
<dbReference type="EMBL" id="BT008375">
    <property type="protein sequence ID" value="AAP37734.1"/>
    <property type="molecule type" value="mRNA"/>
</dbReference>
<dbReference type="PIR" id="T01221">
    <property type="entry name" value="T01221"/>
</dbReference>
<dbReference type="RefSeq" id="NP_191966.2">
    <property type="nucleotide sequence ID" value="NM_116281.4"/>
</dbReference>
<dbReference type="SMR" id="Q8L7K9"/>
<dbReference type="BioGRID" id="13511">
    <property type="interactions" value="2"/>
</dbReference>
<dbReference type="FunCoup" id="Q8L7K9">
    <property type="interactions" value="1501"/>
</dbReference>
<dbReference type="IntAct" id="Q8L7K9">
    <property type="interactions" value="2"/>
</dbReference>
<dbReference type="STRING" id="3702.Q8L7K9"/>
<dbReference type="MetOSite" id="Q8L7K9"/>
<dbReference type="PaxDb" id="3702-AT4G00570.1"/>
<dbReference type="ProteomicsDB" id="250671"/>
<dbReference type="EnsemblPlants" id="AT4G00570.1">
    <property type="protein sequence ID" value="AT4G00570.1"/>
    <property type="gene ID" value="AT4G00570"/>
</dbReference>
<dbReference type="GeneID" id="828222"/>
<dbReference type="Gramene" id="AT4G00570.1">
    <property type="protein sequence ID" value="AT4G00570.1"/>
    <property type="gene ID" value="AT4G00570"/>
</dbReference>
<dbReference type="KEGG" id="ath:AT4G00570"/>
<dbReference type="Araport" id="AT4G00570"/>
<dbReference type="TAIR" id="AT4G00570">
    <property type="gene designation" value="NAD-ME2"/>
</dbReference>
<dbReference type="eggNOG" id="KOG1257">
    <property type="taxonomic scope" value="Eukaryota"/>
</dbReference>
<dbReference type="HOGENOM" id="CLU_011405_5_2_1"/>
<dbReference type="InParanoid" id="Q8L7K9"/>
<dbReference type="OMA" id="AETWAYP"/>
<dbReference type="PhylomeDB" id="Q8L7K9"/>
<dbReference type="BioCyc" id="ARA:AT4G00570-MONOMER"/>
<dbReference type="BRENDA" id="1.1.1.39">
    <property type="organism ID" value="399"/>
</dbReference>
<dbReference type="PRO" id="PR:Q8L7K9"/>
<dbReference type="Proteomes" id="UP000006548">
    <property type="component" value="Chromosome 4"/>
</dbReference>
<dbReference type="ExpressionAtlas" id="Q8L7K9">
    <property type="expression patterns" value="baseline and differential"/>
</dbReference>
<dbReference type="GO" id="GO:0005829">
    <property type="term" value="C:cytosol"/>
    <property type="evidence" value="ECO:0007005"/>
    <property type="project" value="TAIR"/>
</dbReference>
<dbReference type="GO" id="GO:0005739">
    <property type="term" value="C:mitochondrion"/>
    <property type="evidence" value="ECO:0007005"/>
    <property type="project" value="TAIR"/>
</dbReference>
<dbReference type="GO" id="GO:0005524">
    <property type="term" value="F:ATP binding"/>
    <property type="evidence" value="ECO:0007005"/>
    <property type="project" value="TAIR"/>
</dbReference>
<dbReference type="GO" id="GO:0050897">
    <property type="term" value="F:cobalt ion binding"/>
    <property type="evidence" value="ECO:0007005"/>
    <property type="project" value="TAIR"/>
</dbReference>
<dbReference type="GO" id="GO:0004471">
    <property type="term" value="F:malate dehydrogenase (decarboxylating) (NAD+) activity"/>
    <property type="evidence" value="ECO:0000314"/>
    <property type="project" value="TAIR"/>
</dbReference>
<dbReference type="GO" id="GO:0051287">
    <property type="term" value="F:NAD binding"/>
    <property type="evidence" value="ECO:0007669"/>
    <property type="project" value="InterPro"/>
</dbReference>
<dbReference type="GO" id="GO:0042803">
    <property type="term" value="F:protein homodimerization activity"/>
    <property type="evidence" value="ECO:0000314"/>
    <property type="project" value="TAIR"/>
</dbReference>
<dbReference type="GO" id="GO:0008270">
    <property type="term" value="F:zinc ion binding"/>
    <property type="evidence" value="ECO:0007005"/>
    <property type="project" value="TAIR"/>
</dbReference>
<dbReference type="GO" id="GO:0006108">
    <property type="term" value="P:malate metabolic process"/>
    <property type="evidence" value="ECO:0000314"/>
    <property type="project" value="TAIR"/>
</dbReference>
<dbReference type="CDD" id="cd05312">
    <property type="entry name" value="NAD_bind_1_malic_enz"/>
    <property type="match status" value="1"/>
</dbReference>
<dbReference type="FunFam" id="3.40.50.10380:FF:000005">
    <property type="entry name" value="Malic enzyme"/>
    <property type="match status" value="1"/>
</dbReference>
<dbReference type="FunFam" id="3.40.50.720:FF:000237">
    <property type="entry name" value="Malic enzyme"/>
    <property type="match status" value="1"/>
</dbReference>
<dbReference type="Gene3D" id="3.40.50.10380">
    <property type="entry name" value="Malic enzyme, N-terminal domain"/>
    <property type="match status" value="1"/>
</dbReference>
<dbReference type="Gene3D" id="3.40.50.720">
    <property type="entry name" value="NAD(P)-binding Rossmann-like Domain"/>
    <property type="match status" value="1"/>
</dbReference>
<dbReference type="InterPro" id="IPR046346">
    <property type="entry name" value="Aminoacid_DH-like_N_sf"/>
</dbReference>
<dbReference type="InterPro" id="IPR015884">
    <property type="entry name" value="Malic_enzyme_CS"/>
</dbReference>
<dbReference type="InterPro" id="IPR012301">
    <property type="entry name" value="Malic_N_dom"/>
</dbReference>
<dbReference type="InterPro" id="IPR037062">
    <property type="entry name" value="Malic_N_dom_sf"/>
</dbReference>
<dbReference type="InterPro" id="IPR012302">
    <property type="entry name" value="Malic_NAD-bd"/>
</dbReference>
<dbReference type="InterPro" id="IPR001891">
    <property type="entry name" value="Malic_OxRdtase"/>
</dbReference>
<dbReference type="InterPro" id="IPR036291">
    <property type="entry name" value="NAD(P)-bd_dom_sf"/>
</dbReference>
<dbReference type="NCBIfam" id="NF010052">
    <property type="entry name" value="PRK13529.1"/>
    <property type="match status" value="1"/>
</dbReference>
<dbReference type="PANTHER" id="PTHR23406">
    <property type="entry name" value="MALIC ENZYME-RELATED"/>
    <property type="match status" value="1"/>
</dbReference>
<dbReference type="PANTHER" id="PTHR23406:SF73">
    <property type="entry name" value="NAD-DEPENDENT MALIC ENZYME 2, MITOCHONDRIAL"/>
    <property type="match status" value="1"/>
</dbReference>
<dbReference type="Pfam" id="PF00390">
    <property type="entry name" value="malic"/>
    <property type="match status" value="1"/>
</dbReference>
<dbReference type="Pfam" id="PF03949">
    <property type="entry name" value="Malic_M"/>
    <property type="match status" value="1"/>
</dbReference>
<dbReference type="PIRSF" id="PIRSF000106">
    <property type="entry name" value="ME"/>
    <property type="match status" value="1"/>
</dbReference>
<dbReference type="PRINTS" id="PR00072">
    <property type="entry name" value="MALOXRDTASE"/>
</dbReference>
<dbReference type="SMART" id="SM01274">
    <property type="entry name" value="malic"/>
    <property type="match status" value="1"/>
</dbReference>
<dbReference type="SMART" id="SM00919">
    <property type="entry name" value="Malic_M"/>
    <property type="match status" value="1"/>
</dbReference>
<dbReference type="SUPFAM" id="SSF53223">
    <property type="entry name" value="Aminoacid dehydrogenase-like, N-terminal domain"/>
    <property type="match status" value="1"/>
</dbReference>
<dbReference type="SUPFAM" id="SSF51735">
    <property type="entry name" value="NAD(P)-binding Rossmann-fold domains"/>
    <property type="match status" value="1"/>
</dbReference>
<dbReference type="PROSITE" id="PS00331">
    <property type="entry name" value="MALIC_ENZYMES"/>
    <property type="match status" value="1"/>
</dbReference>
<protein>
    <recommendedName>
        <fullName>NAD-dependent malic enzyme 2, mitochondrial</fullName>
        <shortName>AtNAD-ME2</shortName>
        <shortName>NAD-malic enzyme 2</shortName>
        <ecNumber>1.1.1.39</ecNumber>
    </recommendedName>
</protein>
<feature type="transit peptide" description="Mitochondrion" evidence="2">
    <location>
        <begin position="1"/>
        <end position="32"/>
    </location>
</feature>
<feature type="chain" id="PRO_0000420148" description="NAD-dependent malic enzyme 2, mitochondrial">
    <location>
        <begin position="33"/>
        <end position="607"/>
    </location>
</feature>
<feature type="active site" description="Proton donor" evidence="1">
    <location>
        <position position="136"/>
    </location>
</feature>
<feature type="active site" description="Proton acceptor" evidence="1">
    <location>
        <position position="207"/>
    </location>
</feature>
<feature type="binding site" evidence="1">
    <location>
        <position position="189"/>
    </location>
    <ligand>
        <name>NAD(+)</name>
        <dbReference type="ChEBI" id="CHEBI:57540"/>
    </ligand>
</feature>
<feature type="binding site" evidence="1">
    <location>
        <position position="278"/>
    </location>
    <ligand>
        <name>a divalent metal cation</name>
        <dbReference type="ChEBI" id="CHEBI:60240"/>
    </ligand>
</feature>
<feature type="binding site" evidence="1">
    <location>
        <position position="279"/>
    </location>
    <ligand>
        <name>a divalent metal cation</name>
        <dbReference type="ChEBI" id="CHEBI:60240"/>
    </ligand>
</feature>
<feature type="binding site" evidence="1">
    <location>
        <position position="302"/>
    </location>
    <ligand>
        <name>a divalent metal cation</name>
        <dbReference type="ChEBI" id="CHEBI:60240"/>
    </ligand>
</feature>
<feature type="binding site" evidence="1">
    <location>
        <position position="302"/>
    </location>
    <ligand>
        <name>NAD(+)</name>
        <dbReference type="ChEBI" id="CHEBI:57540"/>
    </ligand>
</feature>
<feature type="binding site" evidence="1">
    <location>
        <position position="449"/>
    </location>
    <ligand>
        <name>NAD(+)</name>
        <dbReference type="ChEBI" id="CHEBI:57540"/>
    </ligand>
</feature>
<feature type="site" description="Important for activity" evidence="1">
    <location>
        <position position="302"/>
    </location>
</feature>